<name>SSH4_NEUCR</name>
<proteinExistence type="inferred from homology"/>
<protein>
    <recommendedName>
        <fullName>Protein ssh4</fullName>
    </recommendedName>
</protein>
<dbReference type="EMBL" id="AL353821">
    <property type="protein sequence ID" value="CAD01107.1"/>
    <property type="status" value="ALT_INIT"/>
    <property type="molecule type" value="Genomic_DNA"/>
</dbReference>
<dbReference type="EMBL" id="CM002240">
    <property type="protein sequence ID" value="EAA32218.2"/>
    <property type="molecule type" value="Genomic_DNA"/>
</dbReference>
<dbReference type="PIR" id="T48825">
    <property type="entry name" value="T48825"/>
</dbReference>
<dbReference type="RefSeq" id="XP_961454.2">
    <property type="nucleotide sequence ID" value="XM_956361.3"/>
</dbReference>
<dbReference type="SMR" id="Q96UB6"/>
<dbReference type="FunCoup" id="Q96UB6">
    <property type="interactions" value="31"/>
</dbReference>
<dbReference type="STRING" id="367110.Q96UB6"/>
<dbReference type="GlyCosmos" id="Q96UB6">
    <property type="glycosylation" value="3 sites, No reported glycans"/>
</dbReference>
<dbReference type="PaxDb" id="5141-EFNCRP00000003302"/>
<dbReference type="EnsemblFungi" id="EAA32218">
    <property type="protein sequence ID" value="EAA32218"/>
    <property type="gene ID" value="NCU03678"/>
</dbReference>
<dbReference type="GeneID" id="3877618"/>
<dbReference type="KEGG" id="ncr:NCU03678"/>
<dbReference type="VEuPathDB" id="FungiDB:NCU03678"/>
<dbReference type="HOGENOM" id="CLU_016552_1_1_1"/>
<dbReference type="InParanoid" id="Q96UB6"/>
<dbReference type="OrthoDB" id="258495at2759"/>
<dbReference type="Proteomes" id="UP000001805">
    <property type="component" value="Chromosome 2, Linkage Group V"/>
</dbReference>
<dbReference type="GO" id="GO:0010008">
    <property type="term" value="C:endosome membrane"/>
    <property type="evidence" value="ECO:0007669"/>
    <property type="project" value="UniProtKB-SubCell"/>
</dbReference>
<dbReference type="GO" id="GO:0005774">
    <property type="term" value="C:vacuolar membrane"/>
    <property type="evidence" value="ECO:0007669"/>
    <property type="project" value="UniProtKB-SubCell"/>
</dbReference>
<dbReference type="GO" id="GO:0043328">
    <property type="term" value="P:protein transport to vacuole involved in ubiquitin-dependent protein catabolic process via the multivesicular body sorting pathway"/>
    <property type="evidence" value="ECO:0000318"/>
    <property type="project" value="GO_Central"/>
</dbReference>
<dbReference type="CDD" id="cd12910">
    <property type="entry name" value="SPRY_SSH4_like"/>
    <property type="match status" value="1"/>
</dbReference>
<dbReference type="FunFam" id="2.60.120.920:FF:000065">
    <property type="entry name" value="Ear1p"/>
    <property type="match status" value="1"/>
</dbReference>
<dbReference type="Gene3D" id="2.60.120.920">
    <property type="match status" value="1"/>
</dbReference>
<dbReference type="InterPro" id="IPR001870">
    <property type="entry name" value="B30.2/SPRY"/>
</dbReference>
<dbReference type="InterPro" id="IPR043136">
    <property type="entry name" value="B30.2/SPRY_sf"/>
</dbReference>
<dbReference type="InterPro" id="IPR013320">
    <property type="entry name" value="ConA-like_dom_sf"/>
</dbReference>
<dbReference type="InterPro" id="IPR003877">
    <property type="entry name" value="SPRY_dom"/>
</dbReference>
<dbReference type="InterPro" id="IPR035780">
    <property type="entry name" value="SPRY_Ssh4-like"/>
</dbReference>
<dbReference type="InterPro" id="IPR050618">
    <property type="entry name" value="Ubq-SigPath_Reg"/>
</dbReference>
<dbReference type="PANTHER" id="PTHR12864">
    <property type="entry name" value="RAN BINDING PROTEIN 9-RELATED"/>
    <property type="match status" value="1"/>
</dbReference>
<dbReference type="Pfam" id="PF00622">
    <property type="entry name" value="SPRY"/>
    <property type="match status" value="1"/>
</dbReference>
<dbReference type="SMART" id="SM00449">
    <property type="entry name" value="SPRY"/>
    <property type="match status" value="1"/>
</dbReference>
<dbReference type="SUPFAM" id="SSF49899">
    <property type="entry name" value="Concanavalin A-like lectins/glucanases"/>
    <property type="match status" value="1"/>
</dbReference>
<dbReference type="PROSITE" id="PS50188">
    <property type="entry name" value="B302_SPRY"/>
    <property type="match status" value="1"/>
</dbReference>
<gene>
    <name type="primary">ssh4</name>
    <name type="ORF">68B2.090</name>
    <name type="ORF">NCU03678</name>
</gene>
<keyword id="KW-0967">Endosome</keyword>
<keyword id="KW-0325">Glycoprotein</keyword>
<keyword id="KW-0472">Membrane</keyword>
<keyword id="KW-0653">Protein transport</keyword>
<keyword id="KW-1185">Reference proteome</keyword>
<keyword id="KW-0735">Signal-anchor</keyword>
<keyword id="KW-0812">Transmembrane</keyword>
<keyword id="KW-1133">Transmembrane helix</keyword>
<keyword id="KW-0813">Transport</keyword>
<keyword id="KW-0926">Vacuole</keyword>
<sequence>MITMPDYRPGMNGIIIGLLSSFGSAILIGCFFLIFYFFRCTTSGRIFLDRIGRPGEYDDEQQFLREEAEALETMDDMQRTEYLRAKAFIAANPPESLQTDISLSQYLAIQEKGVSAWEFEPELEIANCFVEARTEIEFFDSECTVMSNLPVPKQNEVYYWEAKIYDKPENTLISIGMATKPYPLFRLPGFHKYSVAYLSNGTRRYNQPFNATSYGPQVVQGDVIGVGYRPRSGTIFFTRNGKKLEDVVHGLKSQNFFPSIGANGPCIVHVNFGQAGFVFIEANVKKWGLAPMTGSLAPPPPYGSEQGSILLEAGTKDGFTSTLGRGRGYSHPVQTYSRQGLAAVDSSHNRTRSGNFRMFPPTSPGPVRSPTDISLAHLVPTEDAGEPSSSAAALVDQDGQPITGGFLSPDQPPPEYTSPVNSRPGSRRHSSDSENTPLIQLSGRSRGASSATARPIQSGGSHNRPRAGSHRPPSPPIPSYQDAVRQGAGRDRSDSTRSARDSS</sequence>
<organism>
    <name type="scientific">Neurospora crassa (strain ATCC 24698 / 74-OR23-1A / CBS 708.71 / DSM 1257 / FGSC 987)</name>
    <dbReference type="NCBI Taxonomy" id="367110"/>
    <lineage>
        <taxon>Eukaryota</taxon>
        <taxon>Fungi</taxon>
        <taxon>Dikarya</taxon>
        <taxon>Ascomycota</taxon>
        <taxon>Pezizomycotina</taxon>
        <taxon>Sordariomycetes</taxon>
        <taxon>Sordariomycetidae</taxon>
        <taxon>Sordariales</taxon>
        <taxon>Sordariaceae</taxon>
        <taxon>Neurospora</taxon>
    </lineage>
</organism>
<feature type="chain" id="PRO_0000324484" description="Protein ssh4">
    <location>
        <begin position="1"/>
        <end position="503"/>
    </location>
</feature>
<feature type="topological domain" description="Cytoplasmic" evidence="2">
    <location>
        <begin position="1"/>
        <end position="13"/>
    </location>
</feature>
<feature type="transmembrane region" description="Helical; Signal-anchor for type II membrane protein" evidence="2">
    <location>
        <begin position="14"/>
        <end position="34"/>
    </location>
</feature>
<feature type="topological domain" description="Lumenal" evidence="2">
    <location>
        <begin position="35"/>
        <end position="503"/>
    </location>
</feature>
<feature type="domain" description="B30.2/SPRY" evidence="3">
    <location>
        <begin position="81"/>
        <end position="277"/>
    </location>
</feature>
<feature type="region of interest" description="Disordered" evidence="4">
    <location>
        <begin position="342"/>
        <end position="372"/>
    </location>
</feature>
<feature type="region of interest" description="Disordered" evidence="4">
    <location>
        <begin position="398"/>
        <end position="503"/>
    </location>
</feature>
<feature type="compositionally biased region" description="Low complexity" evidence="4">
    <location>
        <begin position="442"/>
        <end position="451"/>
    </location>
</feature>
<feature type="compositionally biased region" description="Basic and acidic residues" evidence="4">
    <location>
        <begin position="488"/>
        <end position="503"/>
    </location>
</feature>
<feature type="glycosylation site" description="N-linked (GlcNAc...) asparagine" evidence="2">
    <location>
        <position position="200"/>
    </location>
</feature>
<feature type="glycosylation site" description="N-linked (GlcNAc...) asparagine" evidence="2">
    <location>
        <position position="210"/>
    </location>
</feature>
<feature type="glycosylation site" description="N-linked (GlcNAc...) asparagine" evidence="2">
    <location>
        <position position="349"/>
    </location>
</feature>
<comment type="function">
    <text evidence="1">Components of the endosome-vacuole trafficking pathway that regulates nutrient transport. May be involved in processes which determine whether plasma membrane proteins are degraded or routed to the plasma membrane (By similarity).</text>
</comment>
<comment type="subcellular location">
    <subcellularLocation>
        <location evidence="1">Vacuole membrane</location>
        <topology evidence="1">Single-pass type II membrane protein</topology>
    </subcellularLocation>
    <subcellularLocation>
        <location evidence="1">Endosome membrane</location>
        <topology evidence="1">Single-pass type II membrane protein</topology>
    </subcellularLocation>
</comment>
<comment type="similarity">
    <text evidence="5">Belongs to the SSH4 family.</text>
</comment>
<comment type="sequence caution" evidence="5">
    <conflict type="erroneous initiation">
        <sequence resource="EMBL-CDS" id="CAD01107"/>
    </conflict>
    <text>Truncated N-terminus.</text>
</comment>
<reference key="1">
    <citation type="journal article" date="2003" name="Nucleic Acids Res.">
        <title>What's in the genome of a filamentous fungus? Analysis of the Neurospora genome sequence.</title>
        <authorList>
            <person name="Mannhaupt G."/>
            <person name="Montrone C."/>
            <person name="Haase D."/>
            <person name="Mewes H.-W."/>
            <person name="Aign V."/>
            <person name="Hoheisel J.D."/>
            <person name="Fartmann B."/>
            <person name="Nyakatura G."/>
            <person name="Kempken F."/>
            <person name="Maier J."/>
            <person name="Schulte U."/>
        </authorList>
    </citation>
    <scope>NUCLEOTIDE SEQUENCE [LARGE SCALE GENOMIC DNA]</scope>
    <source>
        <strain>ATCC 24698 / 74-OR23-1A / CBS 708.71 / DSM 1257 / FGSC 987</strain>
    </source>
</reference>
<reference key="2">
    <citation type="journal article" date="2003" name="Nature">
        <title>The genome sequence of the filamentous fungus Neurospora crassa.</title>
        <authorList>
            <person name="Galagan J.E."/>
            <person name="Calvo S.E."/>
            <person name="Borkovich K.A."/>
            <person name="Selker E.U."/>
            <person name="Read N.D."/>
            <person name="Jaffe D.B."/>
            <person name="FitzHugh W."/>
            <person name="Ma L.-J."/>
            <person name="Smirnov S."/>
            <person name="Purcell S."/>
            <person name="Rehman B."/>
            <person name="Elkins T."/>
            <person name="Engels R."/>
            <person name="Wang S."/>
            <person name="Nielsen C.B."/>
            <person name="Butler J."/>
            <person name="Endrizzi M."/>
            <person name="Qui D."/>
            <person name="Ianakiev P."/>
            <person name="Bell-Pedersen D."/>
            <person name="Nelson M.A."/>
            <person name="Werner-Washburne M."/>
            <person name="Selitrennikoff C.P."/>
            <person name="Kinsey J.A."/>
            <person name="Braun E.L."/>
            <person name="Zelter A."/>
            <person name="Schulte U."/>
            <person name="Kothe G.O."/>
            <person name="Jedd G."/>
            <person name="Mewes H.-W."/>
            <person name="Staben C."/>
            <person name="Marcotte E."/>
            <person name="Greenberg D."/>
            <person name="Roy A."/>
            <person name="Foley K."/>
            <person name="Naylor J."/>
            <person name="Stange-Thomann N."/>
            <person name="Barrett R."/>
            <person name="Gnerre S."/>
            <person name="Kamal M."/>
            <person name="Kamvysselis M."/>
            <person name="Mauceli E.W."/>
            <person name="Bielke C."/>
            <person name="Rudd S."/>
            <person name="Frishman D."/>
            <person name="Krystofova S."/>
            <person name="Rasmussen C."/>
            <person name="Metzenberg R.L."/>
            <person name="Perkins D.D."/>
            <person name="Kroken S."/>
            <person name="Cogoni C."/>
            <person name="Macino G."/>
            <person name="Catcheside D.E.A."/>
            <person name="Li W."/>
            <person name="Pratt R.J."/>
            <person name="Osmani S.A."/>
            <person name="DeSouza C.P.C."/>
            <person name="Glass N.L."/>
            <person name="Orbach M.J."/>
            <person name="Berglund J.A."/>
            <person name="Voelker R."/>
            <person name="Yarden O."/>
            <person name="Plamann M."/>
            <person name="Seiler S."/>
            <person name="Dunlap J.C."/>
            <person name="Radford A."/>
            <person name="Aramayo R."/>
            <person name="Natvig D.O."/>
            <person name="Alex L.A."/>
            <person name="Mannhaupt G."/>
            <person name="Ebbole D.J."/>
            <person name="Freitag M."/>
            <person name="Paulsen I."/>
            <person name="Sachs M.S."/>
            <person name="Lander E.S."/>
            <person name="Nusbaum C."/>
            <person name="Birren B.W."/>
        </authorList>
    </citation>
    <scope>NUCLEOTIDE SEQUENCE [LARGE SCALE GENOMIC DNA]</scope>
    <source>
        <strain>ATCC 24698 / 74-OR23-1A / CBS 708.71 / DSM 1257 / FGSC 987</strain>
    </source>
</reference>
<accession>Q96UB6</accession>
<evidence type="ECO:0000250" key="1"/>
<evidence type="ECO:0000255" key="2"/>
<evidence type="ECO:0000255" key="3">
    <source>
        <dbReference type="PROSITE-ProRule" id="PRU00548"/>
    </source>
</evidence>
<evidence type="ECO:0000256" key="4">
    <source>
        <dbReference type="SAM" id="MobiDB-lite"/>
    </source>
</evidence>
<evidence type="ECO:0000305" key="5"/>